<reference key="1">
    <citation type="submission" date="2007-10" db="EMBL/GenBank/DDBJ databases">
        <title>Brucella canis ATCC 23365 whole genome shotgun sequencing project.</title>
        <authorList>
            <person name="Setubal J.C."/>
            <person name="Bowns C."/>
            <person name="Boyle S."/>
            <person name="Crasta O.R."/>
            <person name="Czar M.J."/>
            <person name="Dharmanolla C."/>
            <person name="Gillespie J.J."/>
            <person name="Kenyon R.W."/>
            <person name="Lu J."/>
            <person name="Mane S."/>
            <person name="Mohapatra S."/>
            <person name="Nagrani S."/>
            <person name="Purkayastha A."/>
            <person name="Rajasimha H.K."/>
            <person name="Shallom J.M."/>
            <person name="Shallom S."/>
            <person name="Shukla M."/>
            <person name="Snyder E.E."/>
            <person name="Sobral B.W."/>
            <person name="Wattam A.R."/>
            <person name="Will R."/>
            <person name="Williams K."/>
            <person name="Yoo H."/>
            <person name="Bruce D."/>
            <person name="Detter C."/>
            <person name="Munk C."/>
            <person name="Brettin T.S."/>
        </authorList>
    </citation>
    <scope>NUCLEOTIDE SEQUENCE [LARGE SCALE GENOMIC DNA]</scope>
    <source>
        <strain>ATCC 23365 / NCTC 10854 / RM-666</strain>
    </source>
</reference>
<organism>
    <name type="scientific">Brucella canis (strain ATCC 23365 / NCTC 10854 / RM-666)</name>
    <dbReference type="NCBI Taxonomy" id="483179"/>
    <lineage>
        <taxon>Bacteria</taxon>
        <taxon>Pseudomonadati</taxon>
        <taxon>Pseudomonadota</taxon>
        <taxon>Alphaproteobacteria</taxon>
        <taxon>Hyphomicrobiales</taxon>
        <taxon>Brucellaceae</taxon>
        <taxon>Brucella/Ochrobactrum group</taxon>
        <taxon>Brucella</taxon>
    </lineage>
</organism>
<dbReference type="EC" id="2.1.2.3" evidence="1"/>
<dbReference type="EC" id="3.5.4.10" evidence="1"/>
<dbReference type="EMBL" id="CP000872">
    <property type="protein sequence ID" value="ABX62852.1"/>
    <property type="molecule type" value="Genomic_DNA"/>
</dbReference>
<dbReference type="RefSeq" id="WP_004684287.1">
    <property type="nucleotide sequence ID" value="NC_010103.1"/>
</dbReference>
<dbReference type="SMR" id="A9M854"/>
<dbReference type="GeneID" id="97533059"/>
<dbReference type="KEGG" id="bcs:BCAN_A1854"/>
<dbReference type="HOGENOM" id="CLU_016316_5_2_5"/>
<dbReference type="PhylomeDB" id="A9M854"/>
<dbReference type="UniPathway" id="UPA00074">
    <property type="reaction ID" value="UER00133"/>
</dbReference>
<dbReference type="UniPathway" id="UPA00074">
    <property type="reaction ID" value="UER00135"/>
</dbReference>
<dbReference type="PRO" id="PR:A9M854"/>
<dbReference type="Proteomes" id="UP000001385">
    <property type="component" value="Chromosome I"/>
</dbReference>
<dbReference type="GO" id="GO:0005829">
    <property type="term" value="C:cytosol"/>
    <property type="evidence" value="ECO:0007669"/>
    <property type="project" value="TreeGrafter"/>
</dbReference>
<dbReference type="GO" id="GO:0003937">
    <property type="term" value="F:IMP cyclohydrolase activity"/>
    <property type="evidence" value="ECO:0007669"/>
    <property type="project" value="UniProtKB-UniRule"/>
</dbReference>
<dbReference type="GO" id="GO:0004643">
    <property type="term" value="F:phosphoribosylaminoimidazolecarboxamide formyltransferase activity"/>
    <property type="evidence" value="ECO:0007669"/>
    <property type="project" value="UniProtKB-UniRule"/>
</dbReference>
<dbReference type="GO" id="GO:0006189">
    <property type="term" value="P:'de novo' IMP biosynthetic process"/>
    <property type="evidence" value="ECO:0007669"/>
    <property type="project" value="UniProtKB-UniRule"/>
</dbReference>
<dbReference type="CDD" id="cd01421">
    <property type="entry name" value="IMPCH"/>
    <property type="match status" value="1"/>
</dbReference>
<dbReference type="FunFam" id="3.40.140.20:FF:000001">
    <property type="entry name" value="Bifunctional purine biosynthesis protein PurH"/>
    <property type="match status" value="1"/>
</dbReference>
<dbReference type="FunFam" id="3.40.140.20:FF:000002">
    <property type="entry name" value="Bifunctional purine biosynthesis protein PurH"/>
    <property type="match status" value="1"/>
</dbReference>
<dbReference type="FunFam" id="3.40.50.1380:FF:000001">
    <property type="entry name" value="Bifunctional purine biosynthesis protein PurH"/>
    <property type="match status" value="1"/>
</dbReference>
<dbReference type="Gene3D" id="3.40.140.20">
    <property type="match status" value="2"/>
</dbReference>
<dbReference type="Gene3D" id="3.40.50.1380">
    <property type="entry name" value="Methylglyoxal synthase-like domain"/>
    <property type="match status" value="1"/>
</dbReference>
<dbReference type="HAMAP" id="MF_00139">
    <property type="entry name" value="PurH"/>
    <property type="match status" value="1"/>
</dbReference>
<dbReference type="InterPro" id="IPR024051">
    <property type="entry name" value="AICAR_Tfase_dup_dom_sf"/>
</dbReference>
<dbReference type="InterPro" id="IPR016193">
    <property type="entry name" value="Cytidine_deaminase-like"/>
</dbReference>
<dbReference type="InterPro" id="IPR011607">
    <property type="entry name" value="MGS-like_dom"/>
</dbReference>
<dbReference type="InterPro" id="IPR036914">
    <property type="entry name" value="MGS-like_dom_sf"/>
</dbReference>
<dbReference type="InterPro" id="IPR002695">
    <property type="entry name" value="PurH-like"/>
</dbReference>
<dbReference type="NCBIfam" id="NF002049">
    <property type="entry name" value="PRK00881.1"/>
    <property type="match status" value="1"/>
</dbReference>
<dbReference type="NCBIfam" id="TIGR00355">
    <property type="entry name" value="purH"/>
    <property type="match status" value="1"/>
</dbReference>
<dbReference type="PANTHER" id="PTHR11692:SF0">
    <property type="entry name" value="BIFUNCTIONAL PURINE BIOSYNTHESIS PROTEIN ATIC"/>
    <property type="match status" value="1"/>
</dbReference>
<dbReference type="PANTHER" id="PTHR11692">
    <property type="entry name" value="BIFUNCTIONAL PURINE BIOSYNTHESIS PROTEIN PURH"/>
    <property type="match status" value="1"/>
</dbReference>
<dbReference type="Pfam" id="PF01808">
    <property type="entry name" value="AICARFT_IMPCHas"/>
    <property type="match status" value="1"/>
</dbReference>
<dbReference type="Pfam" id="PF02142">
    <property type="entry name" value="MGS"/>
    <property type="match status" value="1"/>
</dbReference>
<dbReference type="PIRSF" id="PIRSF000414">
    <property type="entry name" value="AICARFT_IMPCHas"/>
    <property type="match status" value="1"/>
</dbReference>
<dbReference type="SMART" id="SM00798">
    <property type="entry name" value="AICARFT_IMPCHas"/>
    <property type="match status" value="1"/>
</dbReference>
<dbReference type="SMART" id="SM00851">
    <property type="entry name" value="MGS"/>
    <property type="match status" value="1"/>
</dbReference>
<dbReference type="SUPFAM" id="SSF53927">
    <property type="entry name" value="Cytidine deaminase-like"/>
    <property type="match status" value="1"/>
</dbReference>
<dbReference type="SUPFAM" id="SSF52335">
    <property type="entry name" value="Methylglyoxal synthase-like"/>
    <property type="match status" value="1"/>
</dbReference>
<dbReference type="PROSITE" id="PS51855">
    <property type="entry name" value="MGS"/>
    <property type="match status" value="1"/>
</dbReference>
<feature type="chain" id="PRO_1000076475" description="Bifunctional purine biosynthesis protein PurH">
    <location>
        <begin position="1"/>
        <end position="538"/>
    </location>
</feature>
<feature type="domain" description="MGS-like" evidence="2">
    <location>
        <begin position="6"/>
        <end position="158"/>
    </location>
</feature>
<comment type="catalytic activity">
    <reaction evidence="1">
        <text>(6R)-10-formyltetrahydrofolate + 5-amino-1-(5-phospho-beta-D-ribosyl)imidazole-4-carboxamide = 5-formamido-1-(5-phospho-D-ribosyl)imidazole-4-carboxamide + (6S)-5,6,7,8-tetrahydrofolate</text>
        <dbReference type="Rhea" id="RHEA:22192"/>
        <dbReference type="ChEBI" id="CHEBI:57453"/>
        <dbReference type="ChEBI" id="CHEBI:58467"/>
        <dbReference type="ChEBI" id="CHEBI:58475"/>
        <dbReference type="ChEBI" id="CHEBI:195366"/>
        <dbReference type="EC" id="2.1.2.3"/>
    </reaction>
</comment>
<comment type="catalytic activity">
    <reaction evidence="1">
        <text>IMP + H2O = 5-formamido-1-(5-phospho-D-ribosyl)imidazole-4-carboxamide</text>
        <dbReference type="Rhea" id="RHEA:18445"/>
        <dbReference type="ChEBI" id="CHEBI:15377"/>
        <dbReference type="ChEBI" id="CHEBI:58053"/>
        <dbReference type="ChEBI" id="CHEBI:58467"/>
        <dbReference type="EC" id="3.5.4.10"/>
    </reaction>
</comment>
<comment type="pathway">
    <text evidence="1">Purine metabolism; IMP biosynthesis via de novo pathway; 5-formamido-1-(5-phospho-D-ribosyl)imidazole-4-carboxamide from 5-amino-1-(5-phospho-D-ribosyl)imidazole-4-carboxamide (10-formyl THF route): step 1/1.</text>
</comment>
<comment type="pathway">
    <text evidence="1">Purine metabolism; IMP biosynthesis via de novo pathway; IMP from 5-formamido-1-(5-phospho-D-ribosyl)imidazole-4-carboxamide: step 1/1.</text>
</comment>
<comment type="domain">
    <text evidence="1">The IMP cyclohydrolase activity resides in the N-terminal region.</text>
</comment>
<comment type="similarity">
    <text evidence="1">Belongs to the PurH family.</text>
</comment>
<evidence type="ECO:0000255" key="1">
    <source>
        <dbReference type="HAMAP-Rule" id="MF_00139"/>
    </source>
</evidence>
<evidence type="ECO:0000255" key="2">
    <source>
        <dbReference type="PROSITE-ProRule" id="PRU01202"/>
    </source>
</evidence>
<keyword id="KW-0378">Hydrolase</keyword>
<keyword id="KW-0511">Multifunctional enzyme</keyword>
<keyword id="KW-0658">Purine biosynthesis</keyword>
<keyword id="KW-1185">Reference proteome</keyword>
<keyword id="KW-0808">Transferase</keyword>
<sequence length="538" mass="56481">MAVSSKHIPAPDLHRVRRALLSVSDKTGLIDFAKALHANGVEILSTGGTAKSIAAAGIPVKDVSEITGFPEIMDGRVKTLHPAVHGGLLAVRNDPEHVAAMEEHGIGGIDLAVINLYPFEEVRFKGGDYDTTVENIDIGGPAMIRASAKNHAYVATVVDPADYADVVAELEKHSGSLPLAFRKKLAAKAFSRTAAYDAAISNWFAEAIDEETPTYRAVAGKLHSVMRYGENPHQTAGFYLTGEKRPGVATATQLQGKQLSYNNINDTDAAFELVAEFDPARTAAVAIIKHANPCGVAEASTIKEAYLKALACDPVSAFGGIVALNRTLDEEAAEEIVKTFTEVIIAPDATEGAQAIVAAKKNLRLLVTGGLPDPRAKGIAAKTVAGGLLVQSRDNGVVDDLDLKVVTKRAPTEAELNDLKFAFRVGKHVKSNAIVYVKDGATVGIGAGQMSRVDSARIAARKAEDAAEAAGLAAPLTKGCVVASDAFFPFADGLLSAVEAGATAVIQPGGSMRDDEVIAAADEHGIAMVMTGMRHFRH</sequence>
<gene>
    <name evidence="1" type="primary">purH</name>
    <name type="ordered locus">BCAN_A1854</name>
</gene>
<proteinExistence type="inferred from homology"/>
<name>PUR9_BRUC2</name>
<accession>A9M854</accession>
<protein>
    <recommendedName>
        <fullName evidence="1">Bifunctional purine biosynthesis protein PurH</fullName>
    </recommendedName>
    <domain>
        <recommendedName>
            <fullName evidence="1">Phosphoribosylaminoimidazolecarboxamide formyltransferase</fullName>
            <ecNumber evidence="1">2.1.2.3</ecNumber>
        </recommendedName>
        <alternativeName>
            <fullName evidence="1">AICAR transformylase</fullName>
        </alternativeName>
    </domain>
    <domain>
        <recommendedName>
            <fullName evidence="1">IMP cyclohydrolase</fullName>
            <ecNumber evidence="1">3.5.4.10</ecNumber>
        </recommendedName>
        <alternativeName>
            <fullName evidence="1">ATIC</fullName>
        </alternativeName>
        <alternativeName>
            <fullName evidence="1">IMP synthase</fullName>
        </alternativeName>
        <alternativeName>
            <fullName evidence="1">Inosinicase</fullName>
        </alternativeName>
    </domain>
</protein>